<feature type="transit peptide" description="Mitochondrion" evidence="8">
    <location>
        <begin position="1"/>
        <end position="30"/>
    </location>
</feature>
<feature type="chain" id="PRO_0000032569" description="Serine hydroxymethyltransferase 1, mitochondrial">
    <location>
        <begin position="31"/>
        <end position="517"/>
    </location>
</feature>
<feature type="modified residue" description="N6-(pyridoxal phosphate)lysine" evidence="1">
    <location>
        <position position="286"/>
    </location>
</feature>
<feature type="sequence conflict" description="In Ref. 4; AAL06913." evidence="11" ref="4">
    <original>D</original>
    <variation>N</variation>
    <location>
        <position position="171"/>
    </location>
</feature>
<protein>
    <recommendedName>
        <fullName evidence="9">Serine hydroxymethyltransferase 1, mitochondrial</fullName>
        <shortName evidence="10">AtSHMT1</shortName>
        <ecNumber evidence="6">2.1.2.1</ecNumber>
    </recommendedName>
    <alternativeName>
        <fullName evidence="11">Glycine hydroxymethyltransferase 1</fullName>
    </alternativeName>
    <alternativeName>
        <fullName evidence="11">Serine Transhydroxymethyltransferase</fullName>
        <shortName evidence="11">STM</shortName>
    </alternativeName>
    <alternativeName>
        <fullName evidence="11">Serine methylase 1</fullName>
    </alternativeName>
</protein>
<accession>Q9SZJ5</accession>
<accession>Q940M9</accession>
<comment type="function">
    <text evidence="3 4 6 7">Functions in the photorespiratory pathway in catalyzing the interconversion of serine and glycine. Involved in controlling cell damage caused by abiotic stress, such as high light and salt and the hypersensitive defense response of plants.</text>
</comment>
<comment type="catalytic activity">
    <reaction evidence="6">
        <text>(6R)-5,10-methylene-5,6,7,8-tetrahydrofolate + glycine + H2O = (6S)-5,6,7,8-tetrahydrofolate + L-serine</text>
        <dbReference type="Rhea" id="RHEA:15481"/>
        <dbReference type="ChEBI" id="CHEBI:15377"/>
        <dbReference type="ChEBI" id="CHEBI:15636"/>
        <dbReference type="ChEBI" id="CHEBI:33384"/>
        <dbReference type="ChEBI" id="CHEBI:57305"/>
        <dbReference type="ChEBI" id="CHEBI:57453"/>
        <dbReference type="EC" id="2.1.2.1"/>
    </reaction>
</comment>
<comment type="cofactor">
    <cofactor evidence="1">
        <name>pyridoxal 5'-phosphate</name>
        <dbReference type="ChEBI" id="CHEBI:597326"/>
    </cofactor>
</comment>
<comment type="pathway">
    <text evidence="11">One-carbon metabolism; tetrahydrofolate interconversion.</text>
</comment>
<comment type="subunit">
    <text evidence="1 5 7">Homotetramer (By similarity). Interacts with GLU1 (PubMed:19223513). Interacts with UBP16 (PubMed:23232097).</text>
</comment>
<comment type="interaction">
    <interactant intactId="EBI-2292536">
        <id>Q9SZJ5</id>
    </interactant>
    <interactant intactId="EBI-2292564">
        <id>Q9ZNZ7</id>
        <label>GLU1</label>
    </interactant>
    <organismsDiffer>false</organismsDiffer>
    <experiments>2</experiments>
</comment>
<comment type="interaction">
    <interactant intactId="EBI-2292536">
        <id>Q9SZJ5</id>
    </interactant>
    <interactant intactId="EBI-6589403">
        <id>Q9SB51</id>
        <label>UBP16</label>
    </interactant>
    <organismsDiffer>false</organismsDiffer>
    <experiments>3</experiments>
</comment>
<comment type="subcellular location">
    <subcellularLocation>
        <location evidence="13">Mitochondrion</location>
    </subcellularLocation>
    <subcellularLocation>
        <location>Cytoplasm</location>
    </subcellularLocation>
</comment>
<comment type="tissue specificity">
    <text evidence="2 3 4 6">Ubiquitous. Mostly expressed in leaves, less abundant in stems, flowers and siliques, and barely detectable in roots.</text>
</comment>
<comment type="induction">
    <text evidence="2">Circadian-regulation. Induction by light.</text>
</comment>
<comment type="PTM">
    <text evidence="7">Ubiquitinated.</text>
</comment>
<comment type="disruption phenotype">
    <text evidence="3 4">Displays a lethal photorespiratory phenotype when grown at ambient carbon dioxide.</text>
</comment>
<comment type="miscellaneous">
    <text evidence="12">Recessive mutant shmt1-1 (shm1-3) shows enhanced susceptibility to salt stress and to biotrophic and necrotrophic pathogens.</text>
</comment>
<comment type="similarity">
    <text evidence="11">Belongs to the SHMT family.</text>
</comment>
<keyword id="KW-0963">Cytoplasm</keyword>
<keyword id="KW-0496">Mitochondrion</keyword>
<keyword id="KW-0554">One-carbon metabolism</keyword>
<keyword id="KW-0663">Pyridoxal phosphate</keyword>
<keyword id="KW-1185">Reference proteome</keyword>
<keyword id="KW-0808">Transferase</keyword>
<keyword id="KW-0809">Transit peptide</keyword>
<keyword id="KW-0832">Ubl conjugation</keyword>
<sequence length="517" mass="57401">MAMAMALRRLSSSIDKPIRPLIRSTSCYMSSLPSEAVDEKERSRVTWPKQLNAPLEEVDPEIADIIEHEKARQWKGLELIPSENFTSVSVMQAVGSVMTNKYSEGYPGARYYGGNEYIDMAETLCQKRALEAFRLDPEKWGVNVQPLSGSPANFHVYTALLKPHERIMALDLPHGGHLSHGYQTDTKKISAVSIFFETMPYRLDESTGYIDYDQMEKSATLFRPKLIVAGASAYARLYDYARIRKVCNKQKAVMLADMAHISGLVAANVIPSPFDYADVVTTTTHKSLRGPRGAMIFFRKGVKEINKQGKEVLYDFEDKINQAVFPGLQGGPHNHTITGLAVALKQATTSEYKAYQEQVLSNSAKFAQTLMERGYELVSGGTDNHLVLVNLKPKGIDGSRVEKVLEAVHIASNKNTVPGDVSAMVPGGIRMGTPALTSRGFVEEDFAKVAEYFDKAVTIALKVKSEAQGTKLKDFVSAMESSSTIQSEIAKLRHEVEEFAKQFPTIGFEKETMKYKN</sequence>
<name>GLYM1_ARATH</name>
<proteinExistence type="evidence at protein level"/>
<evidence type="ECO:0000250" key="1">
    <source>
        <dbReference type="UniProtKB" id="P34896"/>
    </source>
</evidence>
<evidence type="ECO:0000269" key="2">
    <source>
    </source>
</evidence>
<evidence type="ECO:0000269" key="3">
    <source>
    </source>
</evidence>
<evidence type="ECO:0000269" key="4">
    <source>
    </source>
</evidence>
<evidence type="ECO:0000269" key="5">
    <source>
    </source>
</evidence>
<evidence type="ECO:0000269" key="6">
    <source>
    </source>
</evidence>
<evidence type="ECO:0000269" key="7">
    <source>
    </source>
</evidence>
<evidence type="ECO:0000269" key="8">
    <source>
    </source>
</evidence>
<evidence type="ECO:0000303" key="9">
    <source>
    </source>
</evidence>
<evidence type="ECO:0000303" key="10">
    <source>
    </source>
</evidence>
<evidence type="ECO:0000305" key="11"/>
<evidence type="ECO:0000305" key="12">
    <source>
    </source>
</evidence>
<evidence type="ECO:0000305" key="13">
    <source>
    </source>
</evidence>
<evidence type="ECO:0000312" key="14">
    <source>
        <dbReference type="Araport" id="AT4G37930"/>
    </source>
</evidence>
<evidence type="ECO:0000312" key="15">
    <source>
        <dbReference type="EMBL" id="CAB37533.1"/>
    </source>
</evidence>
<reference key="1">
    <citation type="journal article" date="1997" name="Planta">
        <title>Photosynthesis and fluorescence quenching, and the mRNA levels of plastidic glutamine synthetase or of mitochondrial serine hydroxymethyltransferase (SHMT) in the leaves of the wild-type and of the SHMT-deficient stm mutant of Arabidopsis thaliana in relation to the rate of photorespiration.</title>
        <authorList>
            <person name="Beckmann K."/>
            <person name="Dzuibany C."/>
            <person name="Biehler K."/>
            <person name="Fock H."/>
            <person name="Hell R."/>
            <person name="Migge A."/>
            <person name="Becker T.W."/>
        </authorList>
    </citation>
    <scope>NUCLEOTIDE SEQUENCE [MRNA]</scope>
    <source>
        <strain>cv. Columbia</strain>
    </source>
</reference>
<reference key="2">
    <citation type="journal article" date="1999" name="Nature">
        <title>Sequence and analysis of chromosome 4 of the plant Arabidopsis thaliana.</title>
        <authorList>
            <person name="Mayer K.F.X."/>
            <person name="Schueller C."/>
            <person name="Wambutt R."/>
            <person name="Murphy G."/>
            <person name="Volckaert G."/>
            <person name="Pohl T."/>
            <person name="Duesterhoeft A."/>
            <person name="Stiekema W."/>
            <person name="Entian K.-D."/>
            <person name="Terryn N."/>
            <person name="Harris B."/>
            <person name="Ansorge W."/>
            <person name="Brandt P."/>
            <person name="Grivell L.A."/>
            <person name="Rieger M."/>
            <person name="Weichselgartner M."/>
            <person name="de Simone V."/>
            <person name="Obermaier B."/>
            <person name="Mache R."/>
            <person name="Mueller M."/>
            <person name="Kreis M."/>
            <person name="Delseny M."/>
            <person name="Puigdomenech P."/>
            <person name="Watson M."/>
            <person name="Schmidtheini T."/>
            <person name="Reichert B."/>
            <person name="Portetelle D."/>
            <person name="Perez-Alonso M."/>
            <person name="Boutry M."/>
            <person name="Bancroft I."/>
            <person name="Vos P."/>
            <person name="Hoheisel J."/>
            <person name="Zimmermann W."/>
            <person name="Wedler H."/>
            <person name="Ridley P."/>
            <person name="Langham S.-A."/>
            <person name="McCullagh B."/>
            <person name="Bilham L."/>
            <person name="Robben J."/>
            <person name="van der Schueren J."/>
            <person name="Grymonprez B."/>
            <person name="Chuang Y.-J."/>
            <person name="Vandenbussche F."/>
            <person name="Braeken M."/>
            <person name="Weltjens I."/>
            <person name="Voet M."/>
            <person name="Bastiaens I."/>
            <person name="Aert R."/>
            <person name="Defoor E."/>
            <person name="Weitzenegger T."/>
            <person name="Bothe G."/>
            <person name="Ramsperger U."/>
            <person name="Hilbert H."/>
            <person name="Braun M."/>
            <person name="Holzer E."/>
            <person name="Brandt A."/>
            <person name="Peters S."/>
            <person name="van Staveren M."/>
            <person name="Dirkse W."/>
            <person name="Mooijman P."/>
            <person name="Klein Lankhorst R."/>
            <person name="Rose M."/>
            <person name="Hauf J."/>
            <person name="Koetter P."/>
            <person name="Berneiser S."/>
            <person name="Hempel S."/>
            <person name="Feldpausch M."/>
            <person name="Lamberth S."/>
            <person name="Van den Daele H."/>
            <person name="De Keyser A."/>
            <person name="Buysshaert C."/>
            <person name="Gielen J."/>
            <person name="Villarroel R."/>
            <person name="De Clercq R."/>
            <person name="van Montagu M."/>
            <person name="Rogers J."/>
            <person name="Cronin A."/>
            <person name="Quail M.A."/>
            <person name="Bray-Allen S."/>
            <person name="Clark L."/>
            <person name="Doggett J."/>
            <person name="Hall S."/>
            <person name="Kay M."/>
            <person name="Lennard N."/>
            <person name="McLay K."/>
            <person name="Mayes R."/>
            <person name="Pettett A."/>
            <person name="Rajandream M.A."/>
            <person name="Lyne M."/>
            <person name="Benes V."/>
            <person name="Rechmann S."/>
            <person name="Borkova D."/>
            <person name="Bloecker H."/>
            <person name="Scharfe M."/>
            <person name="Grimm M."/>
            <person name="Loehnert T.-H."/>
            <person name="Dose S."/>
            <person name="de Haan M."/>
            <person name="Maarse A.C."/>
            <person name="Schaefer M."/>
            <person name="Mueller-Auer S."/>
            <person name="Gabel C."/>
            <person name="Fuchs M."/>
            <person name="Fartmann B."/>
            <person name="Granderath K."/>
            <person name="Dauner D."/>
            <person name="Herzl A."/>
            <person name="Neumann S."/>
            <person name="Argiriou A."/>
            <person name="Vitale D."/>
            <person name="Liguori R."/>
            <person name="Piravandi E."/>
            <person name="Massenet O."/>
            <person name="Quigley F."/>
            <person name="Clabauld G."/>
            <person name="Muendlein A."/>
            <person name="Felber R."/>
            <person name="Schnabl S."/>
            <person name="Hiller R."/>
            <person name="Schmidt W."/>
            <person name="Lecharny A."/>
            <person name="Aubourg S."/>
            <person name="Chefdor F."/>
            <person name="Cooke R."/>
            <person name="Berger C."/>
            <person name="Monfort A."/>
            <person name="Casacuberta E."/>
            <person name="Gibbons T."/>
            <person name="Weber N."/>
            <person name="Vandenbol M."/>
            <person name="Bargues M."/>
            <person name="Terol J."/>
            <person name="Torres A."/>
            <person name="Perez-Perez A."/>
            <person name="Purnelle B."/>
            <person name="Bent E."/>
            <person name="Johnson S."/>
            <person name="Tacon D."/>
            <person name="Jesse T."/>
            <person name="Heijnen L."/>
            <person name="Schwarz S."/>
            <person name="Scholler P."/>
            <person name="Heber S."/>
            <person name="Francs P."/>
            <person name="Bielke C."/>
            <person name="Frishman D."/>
            <person name="Haase D."/>
            <person name="Lemcke K."/>
            <person name="Mewes H.-W."/>
            <person name="Stocker S."/>
            <person name="Zaccaria P."/>
            <person name="Bevan M."/>
            <person name="Wilson R.K."/>
            <person name="de la Bastide M."/>
            <person name="Habermann K."/>
            <person name="Parnell L."/>
            <person name="Dedhia N."/>
            <person name="Gnoj L."/>
            <person name="Schutz K."/>
            <person name="Huang E."/>
            <person name="Spiegel L."/>
            <person name="Sekhon M."/>
            <person name="Murray J."/>
            <person name="Sheet P."/>
            <person name="Cordes M."/>
            <person name="Abu-Threideh J."/>
            <person name="Stoneking T."/>
            <person name="Kalicki J."/>
            <person name="Graves T."/>
            <person name="Harmon G."/>
            <person name="Edwards J."/>
            <person name="Latreille P."/>
            <person name="Courtney L."/>
            <person name="Cloud J."/>
            <person name="Abbott A."/>
            <person name="Scott K."/>
            <person name="Johnson D."/>
            <person name="Minx P."/>
            <person name="Bentley D."/>
            <person name="Fulton B."/>
            <person name="Miller N."/>
            <person name="Greco T."/>
            <person name="Kemp K."/>
            <person name="Kramer J."/>
            <person name="Fulton L."/>
            <person name="Mardis E."/>
            <person name="Dante M."/>
            <person name="Pepin K."/>
            <person name="Hillier L.W."/>
            <person name="Nelson J."/>
            <person name="Spieth J."/>
            <person name="Ryan E."/>
            <person name="Andrews S."/>
            <person name="Geisel C."/>
            <person name="Layman D."/>
            <person name="Du H."/>
            <person name="Ali J."/>
            <person name="Berghoff A."/>
            <person name="Jones K."/>
            <person name="Drone K."/>
            <person name="Cotton M."/>
            <person name="Joshu C."/>
            <person name="Antonoiu B."/>
            <person name="Zidanic M."/>
            <person name="Strong C."/>
            <person name="Sun H."/>
            <person name="Lamar B."/>
            <person name="Yordan C."/>
            <person name="Ma P."/>
            <person name="Zhong J."/>
            <person name="Preston R."/>
            <person name="Vil D."/>
            <person name="Shekher M."/>
            <person name="Matero A."/>
            <person name="Shah R."/>
            <person name="Swaby I.K."/>
            <person name="O'Shaughnessy A."/>
            <person name="Rodriguez M."/>
            <person name="Hoffman J."/>
            <person name="Till S."/>
            <person name="Granat S."/>
            <person name="Shohdy N."/>
            <person name="Hasegawa A."/>
            <person name="Hameed A."/>
            <person name="Lodhi M."/>
            <person name="Johnson A."/>
            <person name="Chen E."/>
            <person name="Marra M.A."/>
            <person name="Martienssen R."/>
            <person name="McCombie W.R."/>
        </authorList>
    </citation>
    <scope>NUCLEOTIDE SEQUENCE [LARGE SCALE GENOMIC DNA]</scope>
    <source>
        <strain>cv. Columbia</strain>
    </source>
</reference>
<reference key="3">
    <citation type="journal article" date="2017" name="Plant J.">
        <title>Araport11: a complete reannotation of the Arabidopsis thaliana reference genome.</title>
        <authorList>
            <person name="Cheng C.Y."/>
            <person name="Krishnakumar V."/>
            <person name="Chan A.P."/>
            <person name="Thibaud-Nissen F."/>
            <person name="Schobel S."/>
            <person name="Town C.D."/>
        </authorList>
    </citation>
    <scope>GENOME REANNOTATION</scope>
    <source>
        <strain>cv. Columbia</strain>
    </source>
</reference>
<reference key="4">
    <citation type="journal article" date="2003" name="Science">
        <title>Empirical analysis of transcriptional activity in the Arabidopsis genome.</title>
        <authorList>
            <person name="Yamada K."/>
            <person name="Lim J."/>
            <person name="Dale J.M."/>
            <person name="Chen H."/>
            <person name="Shinn P."/>
            <person name="Palm C.J."/>
            <person name="Southwick A.M."/>
            <person name="Wu H.C."/>
            <person name="Kim C.J."/>
            <person name="Nguyen M."/>
            <person name="Pham P.K."/>
            <person name="Cheuk R.F."/>
            <person name="Karlin-Newmann G."/>
            <person name="Liu S.X."/>
            <person name="Lam B."/>
            <person name="Sakano H."/>
            <person name="Wu T."/>
            <person name="Yu G."/>
            <person name="Miranda M."/>
            <person name="Quach H.L."/>
            <person name="Tripp M."/>
            <person name="Chang C.H."/>
            <person name="Lee J.M."/>
            <person name="Toriumi M.J."/>
            <person name="Chan M.M."/>
            <person name="Tang C.C."/>
            <person name="Onodera C.S."/>
            <person name="Deng J.M."/>
            <person name="Akiyama K."/>
            <person name="Ansari Y."/>
            <person name="Arakawa T."/>
            <person name="Banh J."/>
            <person name="Banno F."/>
            <person name="Bowser L."/>
            <person name="Brooks S.Y."/>
            <person name="Carninci P."/>
            <person name="Chao Q."/>
            <person name="Choy N."/>
            <person name="Enju A."/>
            <person name="Goldsmith A.D."/>
            <person name="Gurjal M."/>
            <person name="Hansen N.F."/>
            <person name="Hayashizaki Y."/>
            <person name="Johnson-Hopson C."/>
            <person name="Hsuan V.W."/>
            <person name="Iida K."/>
            <person name="Karnes M."/>
            <person name="Khan S."/>
            <person name="Koesema E."/>
            <person name="Ishida J."/>
            <person name="Jiang P.X."/>
            <person name="Jones T."/>
            <person name="Kawai J."/>
            <person name="Kamiya A."/>
            <person name="Meyers C."/>
            <person name="Nakajima M."/>
            <person name="Narusaka M."/>
            <person name="Seki M."/>
            <person name="Sakurai T."/>
            <person name="Satou M."/>
            <person name="Tamse R."/>
            <person name="Vaysberg M."/>
            <person name="Wallender E.K."/>
            <person name="Wong C."/>
            <person name="Yamamura Y."/>
            <person name="Yuan S."/>
            <person name="Shinozaki K."/>
            <person name="Davis R.W."/>
            <person name="Theologis A."/>
            <person name="Ecker J.R."/>
        </authorList>
    </citation>
    <scope>NUCLEOTIDE SEQUENCE [LARGE SCALE MRNA]</scope>
    <source>
        <strain>cv. Columbia</strain>
    </source>
</reference>
<reference key="5">
    <citation type="journal article" date="2000" name="Plant Physiol.">
        <title>Integrated temporal regulation of the photorespiratory pathway. Circadian regulation of two Arabidopsis genes encoding serine hydroxymethyltransferase.</title>
        <authorList>
            <person name="McClung C.R."/>
            <person name="Hsu M."/>
            <person name="Painter J.E."/>
            <person name="Gagne J.M."/>
            <person name="Karlsberg S.D."/>
            <person name="Salome P.A."/>
        </authorList>
    </citation>
    <scope>GENE FAMILY</scope>
    <scope>NOMENCLATURE</scope>
    <scope>INDUCTION</scope>
    <scope>TISSUE SPECIFICITY</scope>
</reference>
<reference key="6">
    <citation type="journal article" date="2003" name="J. Exp. Bot.">
        <title>Genetic manipulation of glycine decarboxylation.</title>
        <authorList>
            <person name="Bauwe H."/>
            <person name="Kolukisaoglu U."/>
        </authorList>
    </citation>
    <scope>REVIEW</scope>
</reference>
<reference key="7">
    <citation type="journal article" date="2004" name="Plant Cell">
        <title>Experimental analysis of the Arabidopsis mitochondrial proteome highlights signaling and regulatory components, provides assessment of targeting prediction programs, and indicates plant-specific mitochondrial proteins.</title>
        <authorList>
            <person name="Heazlewood J.L."/>
            <person name="Tonti-Filippini J.S."/>
            <person name="Gout A.M."/>
            <person name="Day D.A."/>
            <person name="Whelan J."/>
            <person name="Millar A.H."/>
        </authorList>
    </citation>
    <scope>IDENTIFICATION BY MASS SPECTROMETRY</scope>
    <scope>SUBCELLULAR LOCATION [LARGE SCALE ANALYSIS]</scope>
    <source>
        <strain>cv. Landsberg erecta</strain>
    </source>
</reference>
<reference key="8">
    <citation type="journal article" date="2005" name="Plant J.">
        <title>Arabidopsis SHMT1, a serine hydroxymethyltransferase that functions in the photorespiratory pathway influences resistance to biotic and abiotic stress.</title>
        <authorList>
            <person name="Moreno J.I."/>
            <person name="Martin R."/>
            <person name="Castresana C."/>
        </authorList>
    </citation>
    <scope>FUNCTION</scope>
    <scope>DISRUPTION PHENOTYPE</scope>
    <scope>TISSUE SPECIFICITY</scope>
</reference>
<reference key="9">
    <citation type="journal article" date="2006" name="Plant Physiol.">
        <title>The photorespiratory Arabidopsis shm1 mutant is deficient in SHM1.</title>
        <authorList>
            <person name="Voll L.M."/>
            <person name="Jamai A."/>
            <person name="Renne P."/>
            <person name="Voll H."/>
            <person name="McClung C.R."/>
            <person name="Weber A.P."/>
        </authorList>
    </citation>
    <scope>FUNCTION</scope>
    <scope>DISRUPTION PHENOTYPE</scope>
    <scope>TISSUE SPECIFICITY</scope>
</reference>
<reference key="10">
    <citation type="journal article" date="2009" name="Plant Cell">
        <title>Arabidopsis photorespiratory serine hydroxymethyltransferase activity requires the mitochondrial accumulation of ferredoxin-dependent glutamate synthase.</title>
        <authorList>
            <person name="Jamai A."/>
            <person name="Salome P.A."/>
            <person name="Schilling S.H."/>
            <person name="Weber A.P."/>
            <person name="McClung C.R."/>
        </authorList>
    </citation>
    <scope>INTERACTION WITH GLU1</scope>
</reference>
<reference key="11">
    <citation type="journal article" date="2010" name="Biochem. J.">
        <title>One-carbon metabolism in plants: characterization of a plastid serine hydroxymethyltransferase.</title>
        <authorList>
            <person name="Zhang Y."/>
            <person name="Sun K."/>
            <person name="Sandoval F.J."/>
            <person name="Santiago K."/>
            <person name="Roje S."/>
        </authorList>
    </citation>
    <scope>GENE FAMILY</scope>
</reference>
<reference key="12">
    <citation type="journal article" date="2011" name="Plant Physiol.">
        <title>The presequence of Arabidopsis serine hydroxymethyltransferase SHM2 selectively prevents import into mesophyll mitochondria.</title>
        <authorList>
            <person name="Engel N."/>
            <person name="Ewald R."/>
            <person name="Gupta K.J."/>
            <person name="Zrenner R."/>
            <person name="Hagemann M."/>
            <person name="Bauwe H."/>
        </authorList>
    </citation>
    <scope>CATALYTIC ACTIVITY</scope>
    <scope>TISSUE SPECIFICITY</scope>
    <scope>FUNCTION</scope>
</reference>
<reference key="13">
    <citation type="journal article" date="2012" name="Plant Cell">
        <title>Ubiquitin-specific protease16 modulates salt tolerance in Arabidopsis by regulating Na(+)/H(+) antiport activity and serine hydroxymethyltransferase stability.</title>
        <authorList>
            <person name="Zhou H."/>
            <person name="Zhao J."/>
            <person name="Yang Y."/>
            <person name="Chen C."/>
            <person name="Liu Y."/>
            <person name="Jin X."/>
            <person name="Chen L."/>
            <person name="Li X."/>
            <person name="Deng X.W."/>
            <person name="Schumaker K.S."/>
            <person name="Guo Y."/>
        </authorList>
    </citation>
    <scope>INTERACTION WITH UBP16</scope>
    <scope>SUBCELLULAR LOCATION</scope>
    <scope>UBIQUITINATION</scope>
    <scope>FUNCTION</scope>
</reference>
<reference key="14">
    <citation type="journal article" date="2015" name="Plant Physiol.">
        <title>INTERMEDIATE CLEAVAGE PEPTIDASE55 modifies enzyme amino termini and alters protein stability in Arabidopsis mitochondria.</title>
        <authorList>
            <person name="Huang S."/>
            <person name="Nelson C.J."/>
            <person name="Li L."/>
            <person name="Taylor N.L."/>
            <person name="Stroeher E."/>
            <person name="Peteriet J."/>
            <person name="Millar A.H."/>
        </authorList>
    </citation>
    <scope>IDENTIFICATION BY MASS SPECTROMETRY</scope>
    <scope>CLEAVAGE OF TRANSIT PEPTIDE AFTER SER-30</scope>
</reference>
<organism>
    <name type="scientific">Arabidopsis thaliana</name>
    <name type="common">Mouse-ear cress</name>
    <dbReference type="NCBI Taxonomy" id="3702"/>
    <lineage>
        <taxon>Eukaryota</taxon>
        <taxon>Viridiplantae</taxon>
        <taxon>Streptophyta</taxon>
        <taxon>Embryophyta</taxon>
        <taxon>Tracheophyta</taxon>
        <taxon>Spermatophyta</taxon>
        <taxon>Magnoliopsida</taxon>
        <taxon>eudicotyledons</taxon>
        <taxon>Gunneridae</taxon>
        <taxon>Pentapetalae</taxon>
        <taxon>rosids</taxon>
        <taxon>malvids</taxon>
        <taxon>Brassicales</taxon>
        <taxon>Brassicaceae</taxon>
        <taxon>Camelineae</taxon>
        <taxon>Arabidopsis</taxon>
    </lineage>
</organism>
<gene>
    <name evidence="9" type="primary">SHM1</name>
    <name evidence="10" type="synonym">SHMT1</name>
    <name evidence="11" type="synonym">STM</name>
    <name evidence="14" type="ordered locus">At4g37930</name>
    <name evidence="15" type="ORF">F20D10.50</name>
</gene>
<dbReference type="EC" id="2.1.2.1" evidence="6"/>
<dbReference type="EMBL" id="AJ271726">
    <property type="protein sequence ID" value="CAB71289.1"/>
    <property type="molecule type" value="mRNA"/>
</dbReference>
<dbReference type="EMBL" id="AL035538">
    <property type="protein sequence ID" value="CAB37533.1"/>
    <property type="molecule type" value="Genomic_DNA"/>
</dbReference>
<dbReference type="EMBL" id="AL161592">
    <property type="protein sequence ID" value="CAB80458.1"/>
    <property type="molecule type" value="Genomic_DNA"/>
</dbReference>
<dbReference type="EMBL" id="CP002687">
    <property type="protein sequence ID" value="AEE86855.1"/>
    <property type="molecule type" value="Genomic_DNA"/>
</dbReference>
<dbReference type="EMBL" id="AF428388">
    <property type="protein sequence ID" value="AAL16156.1"/>
    <property type="molecule type" value="mRNA"/>
</dbReference>
<dbReference type="EMBL" id="AY054254">
    <property type="protein sequence ID" value="AAL06913.1"/>
    <property type="molecule type" value="mRNA"/>
</dbReference>
<dbReference type="EMBL" id="AY057645">
    <property type="protein sequence ID" value="AAL15276.1"/>
    <property type="molecule type" value="mRNA"/>
</dbReference>
<dbReference type="EMBL" id="AY070726">
    <property type="protein sequence ID" value="AAL50068.1"/>
    <property type="molecule type" value="mRNA"/>
</dbReference>
<dbReference type="EMBL" id="BT006353">
    <property type="protein sequence ID" value="AAP21161.1"/>
    <property type="molecule type" value="mRNA"/>
</dbReference>
<dbReference type="PIR" id="T05620">
    <property type="entry name" value="T05620"/>
</dbReference>
<dbReference type="RefSeq" id="NP_195506.1">
    <property type="nucleotide sequence ID" value="NM_119954.4"/>
</dbReference>
<dbReference type="SMR" id="Q9SZJ5"/>
<dbReference type="BioGRID" id="15230">
    <property type="interactions" value="15"/>
</dbReference>
<dbReference type="FunCoup" id="Q9SZJ5">
    <property type="interactions" value="3464"/>
</dbReference>
<dbReference type="IntAct" id="Q9SZJ5">
    <property type="interactions" value="2"/>
</dbReference>
<dbReference type="STRING" id="3702.Q9SZJ5"/>
<dbReference type="iPTMnet" id="Q9SZJ5"/>
<dbReference type="PaxDb" id="3702-AT4G37930.1"/>
<dbReference type="ProteomicsDB" id="248432"/>
<dbReference type="EnsemblPlants" id="AT4G37930.1">
    <property type="protein sequence ID" value="AT4G37930.1"/>
    <property type="gene ID" value="AT4G37930"/>
</dbReference>
<dbReference type="GeneID" id="829949"/>
<dbReference type="Gramene" id="AT4G37930.1">
    <property type="protein sequence ID" value="AT4G37930.1"/>
    <property type="gene ID" value="AT4G37930"/>
</dbReference>
<dbReference type="KEGG" id="ath:AT4G37930"/>
<dbReference type="Araport" id="AT4G37930"/>
<dbReference type="TAIR" id="AT4G37930">
    <property type="gene designation" value="SHM1"/>
</dbReference>
<dbReference type="eggNOG" id="KOG2467">
    <property type="taxonomic scope" value="Eukaryota"/>
</dbReference>
<dbReference type="HOGENOM" id="CLU_022477_0_1_1"/>
<dbReference type="InParanoid" id="Q9SZJ5"/>
<dbReference type="OMA" id="CQFANVQ"/>
<dbReference type="OrthoDB" id="1032732at2759"/>
<dbReference type="PhylomeDB" id="Q9SZJ5"/>
<dbReference type="BioCyc" id="ARA:AT4G37930-MONOMER"/>
<dbReference type="BioCyc" id="MetaCyc:AT4G37930-MONOMER"/>
<dbReference type="UniPathway" id="UPA00193"/>
<dbReference type="CD-CODE" id="4299E36E">
    <property type="entry name" value="Nucleolus"/>
</dbReference>
<dbReference type="PRO" id="PR:Q9SZJ5"/>
<dbReference type="Proteomes" id="UP000006548">
    <property type="component" value="Chromosome 4"/>
</dbReference>
<dbReference type="ExpressionAtlas" id="Q9SZJ5">
    <property type="expression patterns" value="baseline and differential"/>
</dbReference>
<dbReference type="GO" id="GO:0048046">
    <property type="term" value="C:apoplast"/>
    <property type="evidence" value="ECO:0007005"/>
    <property type="project" value="TAIR"/>
</dbReference>
<dbReference type="GO" id="GO:0009570">
    <property type="term" value="C:chloroplast stroma"/>
    <property type="evidence" value="ECO:0007005"/>
    <property type="project" value="TAIR"/>
</dbReference>
<dbReference type="GO" id="GO:0009534">
    <property type="term" value="C:chloroplast thylakoid"/>
    <property type="evidence" value="ECO:0007005"/>
    <property type="project" value="TAIR"/>
</dbReference>
<dbReference type="GO" id="GO:0005829">
    <property type="term" value="C:cytosol"/>
    <property type="evidence" value="ECO:0000314"/>
    <property type="project" value="UniProtKB"/>
</dbReference>
<dbReference type="GO" id="GO:0022626">
    <property type="term" value="C:cytosolic ribosome"/>
    <property type="evidence" value="ECO:0007005"/>
    <property type="project" value="TAIR"/>
</dbReference>
<dbReference type="GO" id="GO:0005759">
    <property type="term" value="C:mitochondrial matrix"/>
    <property type="evidence" value="ECO:0000250"/>
    <property type="project" value="TAIR"/>
</dbReference>
<dbReference type="GO" id="GO:0005739">
    <property type="term" value="C:mitochondrion"/>
    <property type="evidence" value="ECO:0000314"/>
    <property type="project" value="UniProtKB"/>
</dbReference>
<dbReference type="GO" id="GO:0005634">
    <property type="term" value="C:nucleus"/>
    <property type="evidence" value="ECO:0007005"/>
    <property type="project" value="TAIR"/>
</dbReference>
<dbReference type="GO" id="GO:0005886">
    <property type="term" value="C:plasma membrane"/>
    <property type="evidence" value="ECO:0007005"/>
    <property type="project" value="TAIR"/>
</dbReference>
<dbReference type="GO" id="GO:0010319">
    <property type="term" value="C:stromule"/>
    <property type="evidence" value="ECO:0000314"/>
    <property type="project" value="TAIR"/>
</dbReference>
<dbReference type="GO" id="GO:0004372">
    <property type="term" value="F:glycine hydroxymethyltransferase activity"/>
    <property type="evidence" value="ECO:0000314"/>
    <property type="project" value="UniProtKB"/>
</dbReference>
<dbReference type="GO" id="GO:0003729">
    <property type="term" value="F:mRNA binding"/>
    <property type="evidence" value="ECO:0000314"/>
    <property type="project" value="TAIR"/>
</dbReference>
<dbReference type="GO" id="GO:0008266">
    <property type="term" value="F:poly(U) RNA binding"/>
    <property type="evidence" value="ECO:0000314"/>
    <property type="project" value="TAIR"/>
</dbReference>
<dbReference type="GO" id="GO:0030170">
    <property type="term" value="F:pyridoxal phosphate binding"/>
    <property type="evidence" value="ECO:0007669"/>
    <property type="project" value="InterPro"/>
</dbReference>
<dbReference type="GO" id="GO:0007623">
    <property type="term" value="P:circadian rhythm"/>
    <property type="evidence" value="ECO:0000270"/>
    <property type="project" value="UniProtKB"/>
</dbReference>
<dbReference type="GO" id="GO:0019264">
    <property type="term" value="P:glycine biosynthetic process from serine"/>
    <property type="evidence" value="ECO:0007669"/>
    <property type="project" value="InterPro"/>
</dbReference>
<dbReference type="GO" id="GO:0006544">
    <property type="term" value="P:glycine metabolic process"/>
    <property type="evidence" value="ECO:0000314"/>
    <property type="project" value="UniProtKB"/>
</dbReference>
<dbReference type="GO" id="GO:0006563">
    <property type="term" value="P:L-serine metabolic process"/>
    <property type="evidence" value="ECO:0000314"/>
    <property type="project" value="UniProtKB"/>
</dbReference>
<dbReference type="GO" id="GO:0009853">
    <property type="term" value="P:photorespiration"/>
    <property type="evidence" value="ECO:0000315"/>
    <property type="project" value="UniProtKB"/>
</dbReference>
<dbReference type="GO" id="GO:0009626">
    <property type="term" value="P:plant-type hypersensitive response"/>
    <property type="evidence" value="ECO:0000304"/>
    <property type="project" value="TAIR"/>
</dbReference>
<dbReference type="GO" id="GO:0009409">
    <property type="term" value="P:response to cold"/>
    <property type="evidence" value="ECO:0000270"/>
    <property type="project" value="TAIR"/>
</dbReference>
<dbReference type="GO" id="GO:0009416">
    <property type="term" value="P:response to light stimulus"/>
    <property type="evidence" value="ECO:0000270"/>
    <property type="project" value="UniProtKB"/>
</dbReference>
<dbReference type="GO" id="GO:0035999">
    <property type="term" value="P:tetrahydrofolate interconversion"/>
    <property type="evidence" value="ECO:0007669"/>
    <property type="project" value="UniProtKB-UniPathway"/>
</dbReference>
<dbReference type="CDD" id="cd00378">
    <property type="entry name" value="SHMT"/>
    <property type="match status" value="1"/>
</dbReference>
<dbReference type="FunFam" id="3.40.640.10:FF:000050">
    <property type="entry name" value="Serine hydroxymethyltransferase"/>
    <property type="match status" value="1"/>
</dbReference>
<dbReference type="FunFam" id="3.90.1150.10:FF:000005">
    <property type="entry name" value="Serine hydroxymethyltransferase"/>
    <property type="match status" value="1"/>
</dbReference>
<dbReference type="Gene3D" id="3.90.1150.10">
    <property type="entry name" value="Aspartate Aminotransferase, domain 1"/>
    <property type="match status" value="1"/>
</dbReference>
<dbReference type="Gene3D" id="3.40.640.10">
    <property type="entry name" value="Type I PLP-dependent aspartate aminotransferase-like (Major domain)"/>
    <property type="match status" value="1"/>
</dbReference>
<dbReference type="HAMAP" id="MF_00051">
    <property type="entry name" value="SHMT"/>
    <property type="match status" value="1"/>
</dbReference>
<dbReference type="InterPro" id="IPR015424">
    <property type="entry name" value="PyrdxlP-dep_Trfase"/>
</dbReference>
<dbReference type="InterPro" id="IPR015421">
    <property type="entry name" value="PyrdxlP-dep_Trfase_major"/>
</dbReference>
<dbReference type="InterPro" id="IPR015422">
    <property type="entry name" value="PyrdxlP-dep_Trfase_small"/>
</dbReference>
<dbReference type="InterPro" id="IPR001085">
    <property type="entry name" value="Ser_HO-MeTrfase"/>
</dbReference>
<dbReference type="InterPro" id="IPR049943">
    <property type="entry name" value="Ser_HO-MeTrfase-like"/>
</dbReference>
<dbReference type="InterPro" id="IPR019798">
    <property type="entry name" value="Ser_HO-MeTrfase_PLP_BS"/>
</dbReference>
<dbReference type="InterPro" id="IPR039429">
    <property type="entry name" value="SHMT-like_dom"/>
</dbReference>
<dbReference type="NCBIfam" id="NF000586">
    <property type="entry name" value="PRK00011.1"/>
    <property type="match status" value="1"/>
</dbReference>
<dbReference type="PANTHER" id="PTHR11680">
    <property type="entry name" value="SERINE HYDROXYMETHYLTRANSFERASE"/>
    <property type="match status" value="1"/>
</dbReference>
<dbReference type="PANTHER" id="PTHR11680:SF61">
    <property type="entry name" value="SERINE HYDROXYMETHYLTRANSFERASE 1, MITOCHONDRIAL"/>
    <property type="match status" value="1"/>
</dbReference>
<dbReference type="Pfam" id="PF00464">
    <property type="entry name" value="SHMT"/>
    <property type="match status" value="1"/>
</dbReference>
<dbReference type="PIRSF" id="PIRSF000412">
    <property type="entry name" value="SHMT"/>
    <property type="match status" value="1"/>
</dbReference>
<dbReference type="SUPFAM" id="SSF53383">
    <property type="entry name" value="PLP-dependent transferases"/>
    <property type="match status" value="1"/>
</dbReference>
<dbReference type="PROSITE" id="PS00096">
    <property type="entry name" value="SHMT"/>
    <property type="match status" value="1"/>
</dbReference>